<sequence length="471" mass="54871">MSRSLLVENSRTINSNEEKGVNESQYILQKRNVPRTILGNVTNNANILQEISMNRKIGMKNFSKLNNFFPLKDDVSRADDFTSSFNDSRQGVKQEVLNNKENIPEYGYSEQEKQQCSNDDSFHTNSTALSCNRLIYSENKSISTQMEWQKKIMREDSKKKRPISTLVEQDDQKKFKLHELTTEEEVLEEYEWDDLDEEDCDDPLMVSEEVNDIFDYLHHLEIITLPNKANLYKHKNIKQNRDILVNWIIKIHNKFGLLPETLYLAINIMDRFLCEEVVQLNRLQLVGTSCLFIASKYEEIYSPSIKHFAYETDGACSVEDIKEGERFILEKLDFQISFANPMNFLRRISKADDYDIQSRTLAKFLMEISIVDFKFIGILPSLCASAAMFLSRKMLGKGTWDGNLIHYSGGYTKAKLYPVCQLLMDYLVGSTIHDEFLKKYQSRRFLKASIISIEWALKVRKNGYDIMTLHE</sequence>
<protein>
    <recommendedName>
        <fullName>G2/mitotic-specific cyclin-1</fullName>
    </recommendedName>
</protein>
<feature type="chain" id="PRO_0000080403" description="G2/mitotic-specific cyclin-1">
    <location>
        <begin position="1"/>
        <end position="471"/>
    </location>
</feature>
<evidence type="ECO:0000269" key="1">
    <source>
    </source>
</evidence>
<evidence type="ECO:0000305" key="2"/>
<dbReference type="EMBL" id="M65069">
    <property type="protein sequence ID" value="AAA34501.1"/>
    <property type="molecule type" value="Genomic_DNA"/>
</dbReference>
<dbReference type="EMBL" id="M62389">
    <property type="protein sequence ID" value="AAA35019.1"/>
    <property type="molecule type" value="Genomic_DNA"/>
</dbReference>
<dbReference type="EMBL" id="Z72893">
    <property type="protein sequence ID" value="CAA97112.1"/>
    <property type="molecule type" value="Genomic_DNA"/>
</dbReference>
<dbReference type="EMBL" id="BK006941">
    <property type="protein sequence ID" value="DAA08200.1"/>
    <property type="molecule type" value="Genomic_DNA"/>
</dbReference>
<dbReference type="PIR" id="S14165">
    <property type="entry name" value="S14165"/>
</dbReference>
<dbReference type="RefSeq" id="NP_011622.1">
    <property type="nucleotide sequence ID" value="NM_001181237.1"/>
</dbReference>
<dbReference type="SMR" id="P24868"/>
<dbReference type="BioGRID" id="33352">
    <property type="interactions" value="105"/>
</dbReference>
<dbReference type="ComplexPortal" id="CPX-335">
    <property type="entry name" value="CLB1-CDC28 kinase complex"/>
</dbReference>
<dbReference type="DIP" id="DIP-1261N"/>
<dbReference type="FunCoup" id="P24868">
    <property type="interactions" value="762"/>
</dbReference>
<dbReference type="IntAct" id="P24868">
    <property type="interactions" value="9"/>
</dbReference>
<dbReference type="MINT" id="P24868"/>
<dbReference type="STRING" id="4932.YGR108W"/>
<dbReference type="iPTMnet" id="P24868"/>
<dbReference type="PaxDb" id="4932-YGR108W"/>
<dbReference type="PeptideAtlas" id="P24868"/>
<dbReference type="EnsemblFungi" id="YGR108W_mRNA">
    <property type="protein sequence ID" value="YGR108W"/>
    <property type="gene ID" value="YGR108W"/>
</dbReference>
<dbReference type="GeneID" id="853002"/>
<dbReference type="KEGG" id="sce:YGR108W"/>
<dbReference type="AGR" id="SGD:S000003340"/>
<dbReference type="SGD" id="S000003340">
    <property type="gene designation" value="CLB1"/>
</dbReference>
<dbReference type="VEuPathDB" id="FungiDB:YGR108W"/>
<dbReference type="eggNOG" id="KOG0653">
    <property type="taxonomic scope" value="Eukaryota"/>
</dbReference>
<dbReference type="GeneTree" id="ENSGT00940000176520"/>
<dbReference type="HOGENOM" id="CLU_020695_10_4_1"/>
<dbReference type="InParanoid" id="P24868"/>
<dbReference type="OrthoDB" id="5590282at2759"/>
<dbReference type="BioCyc" id="YEAST:G3O-30817-MONOMER"/>
<dbReference type="BioGRID-ORCS" id="853002">
    <property type="hits" value="0 hits in 10 CRISPR screens"/>
</dbReference>
<dbReference type="PRO" id="PR:P24868"/>
<dbReference type="Proteomes" id="UP000002311">
    <property type="component" value="Chromosome VII"/>
</dbReference>
<dbReference type="RNAct" id="P24868">
    <property type="molecule type" value="protein"/>
</dbReference>
<dbReference type="GO" id="GO:0000307">
    <property type="term" value="C:cyclin-dependent protein kinase holoenzyme complex"/>
    <property type="evidence" value="ECO:0000314"/>
    <property type="project" value="SGD"/>
</dbReference>
<dbReference type="GO" id="GO:0005737">
    <property type="term" value="C:cytoplasm"/>
    <property type="evidence" value="ECO:0000314"/>
    <property type="project" value="SGD"/>
</dbReference>
<dbReference type="GO" id="GO:0005815">
    <property type="term" value="C:microtubule organizing center"/>
    <property type="evidence" value="ECO:0000318"/>
    <property type="project" value="GO_Central"/>
</dbReference>
<dbReference type="GO" id="GO:0005634">
    <property type="term" value="C:nucleus"/>
    <property type="evidence" value="ECO:0000314"/>
    <property type="project" value="SGD"/>
</dbReference>
<dbReference type="GO" id="GO:0016538">
    <property type="term" value="F:cyclin-dependent protein serine/threonine kinase regulator activity"/>
    <property type="evidence" value="ECO:0000315"/>
    <property type="project" value="SGD"/>
</dbReference>
<dbReference type="GO" id="GO:0051301">
    <property type="term" value="P:cell division"/>
    <property type="evidence" value="ECO:0007669"/>
    <property type="project" value="UniProtKB-KW"/>
</dbReference>
<dbReference type="GO" id="GO:0000082">
    <property type="term" value="P:G1/S transition of mitotic cell cycle"/>
    <property type="evidence" value="ECO:0000318"/>
    <property type="project" value="GO_Central"/>
</dbReference>
<dbReference type="GO" id="GO:0000086">
    <property type="term" value="P:G2/M transition of mitotic cell cycle"/>
    <property type="evidence" value="ECO:0000315"/>
    <property type="project" value="SGD"/>
</dbReference>
<dbReference type="GO" id="GO:0008315">
    <property type="term" value="P:G2/MI transition of meiotic cell cycle"/>
    <property type="evidence" value="ECO:0000315"/>
    <property type="project" value="SGD"/>
</dbReference>
<dbReference type="GO" id="GO:0007052">
    <property type="term" value="P:mitotic spindle organization"/>
    <property type="evidence" value="ECO:0000315"/>
    <property type="project" value="SGD"/>
</dbReference>
<dbReference type="GO" id="GO:0010696">
    <property type="term" value="P:positive regulation of mitotic spindle pole body separation"/>
    <property type="evidence" value="ECO:0000316"/>
    <property type="project" value="SGD"/>
</dbReference>
<dbReference type="GO" id="GO:0060631">
    <property type="term" value="P:regulation of meiosis I"/>
    <property type="evidence" value="ECO:0000314"/>
    <property type="project" value="SGD"/>
</dbReference>
<dbReference type="GO" id="GO:0007089">
    <property type="term" value="P:traversing start control point of mitotic cell cycle"/>
    <property type="evidence" value="ECO:0000318"/>
    <property type="project" value="GO_Central"/>
</dbReference>
<dbReference type="CDD" id="cd20568">
    <property type="entry name" value="CYCLIN_CLBs_yeast_rpt1"/>
    <property type="match status" value="1"/>
</dbReference>
<dbReference type="CDD" id="cd20512">
    <property type="entry name" value="CYCLIN_CLBs_yeast_rpt2"/>
    <property type="match status" value="1"/>
</dbReference>
<dbReference type="FunFam" id="1.10.472.10:FF:000005">
    <property type="entry name" value="G2/mitotic-specific cyclin B"/>
    <property type="match status" value="1"/>
</dbReference>
<dbReference type="Gene3D" id="1.10.472.10">
    <property type="entry name" value="Cyclin-like"/>
    <property type="match status" value="2"/>
</dbReference>
<dbReference type="InterPro" id="IPR039361">
    <property type="entry name" value="Cyclin"/>
</dbReference>
<dbReference type="InterPro" id="IPR013763">
    <property type="entry name" value="Cyclin-like_dom"/>
</dbReference>
<dbReference type="InterPro" id="IPR036915">
    <property type="entry name" value="Cyclin-like_sf"/>
</dbReference>
<dbReference type="InterPro" id="IPR046965">
    <property type="entry name" value="Cyclin_A/B-like"/>
</dbReference>
<dbReference type="InterPro" id="IPR004367">
    <property type="entry name" value="Cyclin_C-dom"/>
</dbReference>
<dbReference type="InterPro" id="IPR006671">
    <property type="entry name" value="Cyclin_N"/>
</dbReference>
<dbReference type="InterPro" id="IPR048258">
    <property type="entry name" value="Cyclins_cyclin-box"/>
</dbReference>
<dbReference type="PANTHER" id="PTHR10177">
    <property type="entry name" value="CYCLINS"/>
    <property type="match status" value="1"/>
</dbReference>
<dbReference type="Pfam" id="PF02984">
    <property type="entry name" value="Cyclin_C"/>
    <property type="match status" value="1"/>
</dbReference>
<dbReference type="Pfam" id="PF00134">
    <property type="entry name" value="Cyclin_N"/>
    <property type="match status" value="1"/>
</dbReference>
<dbReference type="PIRSF" id="PIRSF001771">
    <property type="entry name" value="Cyclin_A_B_D_E"/>
    <property type="match status" value="1"/>
</dbReference>
<dbReference type="SMART" id="SM00385">
    <property type="entry name" value="CYCLIN"/>
    <property type="match status" value="2"/>
</dbReference>
<dbReference type="SMART" id="SM01332">
    <property type="entry name" value="Cyclin_C"/>
    <property type="match status" value="1"/>
</dbReference>
<dbReference type="SUPFAM" id="SSF47954">
    <property type="entry name" value="Cyclin-like"/>
    <property type="match status" value="2"/>
</dbReference>
<dbReference type="PROSITE" id="PS00292">
    <property type="entry name" value="CYCLINS"/>
    <property type="match status" value="1"/>
</dbReference>
<accession>P24868</accession>
<accession>D6VUN9</accession>
<reference key="1">
    <citation type="journal article" date="1991" name="Cell">
        <title>The role of CDC28 and cyclins during mitosis in the budding yeast S. cerevisiae.</title>
        <authorList>
            <person name="Surana U."/>
            <person name="Robitsch H."/>
            <person name="Price C."/>
            <person name="Schuster T."/>
            <person name="Fitch I."/>
            <person name="Futcher A.B."/>
            <person name="Nasmyth K."/>
        </authorList>
    </citation>
    <scope>NUCLEOTIDE SEQUENCE [GENOMIC DNA]</scope>
</reference>
<reference key="2">
    <citation type="journal article" date="1991" name="Cell">
        <title>A cyclin B homolog in S. cerevisiae: chronic activation of the Cdc28 protein kinase by cyclin prevents exit from mitosis.</title>
        <authorList>
            <person name="Ghiara J.B."/>
            <person name="Richardson H.E."/>
            <person name="Sugimoto K."/>
            <person name="Henze M."/>
            <person name="Lew D.J."/>
            <person name="Wittenberg C."/>
            <person name="Reed S.I."/>
        </authorList>
    </citation>
    <scope>NUCLEOTIDE SEQUENCE [GENOMIC DNA]</scope>
</reference>
<reference key="3">
    <citation type="journal article" date="1997" name="Nature">
        <title>The nucleotide sequence of Saccharomyces cerevisiae chromosome VII.</title>
        <authorList>
            <person name="Tettelin H."/>
            <person name="Agostoni-Carbone M.L."/>
            <person name="Albermann K."/>
            <person name="Albers M."/>
            <person name="Arroyo J."/>
            <person name="Backes U."/>
            <person name="Barreiros T."/>
            <person name="Bertani I."/>
            <person name="Bjourson A.J."/>
            <person name="Brueckner M."/>
            <person name="Bruschi C.V."/>
            <person name="Carignani G."/>
            <person name="Castagnoli L."/>
            <person name="Cerdan E."/>
            <person name="Clemente M.L."/>
            <person name="Coblenz A."/>
            <person name="Coglievina M."/>
            <person name="Coissac E."/>
            <person name="Defoor E."/>
            <person name="Del Bino S."/>
            <person name="Delius H."/>
            <person name="Delneri D."/>
            <person name="de Wergifosse P."/>
            <person name="Dujon B."/>
            <person name="Durand P."/>
            <person name="Entian K.-D."/>
            <person name="Eraso P."/>
            <person name="Escribano V."/>
            <person name="Fabiani L."/>
            <person name="Fartmann B."/>
            <person name="Feroli F."/>
            <person name="Feuermann M."/>
            <person name="Frontali L."/>
            <person name="Garcia-Gonzalez M."/>
            <person name="Garcia-Saez M.I."/>
            <person name="Goffeau A."/>
            <person name="Guerreiro P."/>
            <person name="Hani J."/>
            <person name="Hansen M."/>
            <person name="Hebling U."/>
            <person name="Hernandez K."/>
            <person name="Heumann K."/>
            <person name="Hilger F."/>
            <person name="Hofmann B."/>
            <person name="Indge K.J."/>
            <person name="James C.M."/>
            <person name="Klima R."/>
            <person name="Koetter P."/>
            <person name="Kramer B."/>
            <person name="Kramer W."/>
            <person name="Lauquin G."/>
            <person name="Leuther H."/>
            <person name="Louis E.J."/>
            <person name="Maillier E."/>
            <person name="Marconi A."/>
            <person name="Martegani E."/>
            <person name="Mazon M.J."/>
            <person name="Mazzoni C."/>
            <person name="McReynolds A.D.K."/>
            <person name="Melchioretto P."/>
            <person name="Mewes H.-W."/>
            <person name="Minenkova O."/>
            <person name="Mueller-Auer S."/>
            <person name="Nawrocki A."/>
            <person name="Netter P."/>
            <person name="Neu R."/>
            <person name="Nombela C."/>
            <person name="Oliver S.G."/>
            <person name="Panzeri L."/>
            <person name="Paoluzi S."/>
            <person name="Plevani P."/>
            <person name="Portetelle D."/>
            <person name="Portillo F."/>
            <person name="Potier S."/>
            <person name="Purnelle B."/>
            <person name="Rieger M."/>
            <person name="Riles L."/>
            <person name="Rinaldi T."/>
            <person name="Robben J."/>
            <person name="Rodrigues-Pousada C."/>
            <person name="Rodriguez-Belmonte E."/>
            <person name="Rodriguez-Torres A.M."/>
            <person name="Rose M."/>
            <person name="Ruzzi M."/>
            <person name="Saliola M."/>
            <person name="Sanchez-Perez M."/>
            <person name="Schaefer B."/>
            <person name="Schaefer M."/>
            <person name="Scharfe M."/>
            <person name="Schmidheini T."/>
            <person name="Schreer A."/>
            <person name="Skala J."/>
            <person name="Souciet J.-L."/>
            <person name="Steensma H.Y."/>
            <person name="Talla E."/>
            <person name="Thierry A."/>
            <person name="Vandenbol M."/>
            <person name="van der Aart Q.J.M."/>
            <person name="Van Dyck L."/>
            <person name="Vanoni M."/>
            <person name="Verhasselt P."/>
            <person name="Voet M."/>
            <person name="Volckaert G."/>
            <person name="Wambutt R."/>
            <person name="Watson M.D."/>
            <person name="Weber N."/>
            <person name="Wedler E."/>
            <person name="Wedler H."/>
            <person name="Wipfli P."/>
            <person name="Wolf K."/>
            <person name="Wright L.F."/>
            <person name="Zaccaria P."/>
            <person name="Zimmermann M."/>
            <person name="Zollner A."/>
            <person name="Kleine K."/>
        </authorList>
    </citation>
    <scope>NUCLEOTIDE SEQUENCE [LARGE SCALE GENOMIC DNA]</scope>
    <source>
        <strain>ATCC 204508 / S288c</strain>
    </source>
</reference>
<reference key="4">
    <citation type="journal article" date="2014" name="G3 (Bethesda)">
        <title>The reference genome sequence of Saccharomyces cerevisiae: Then and now.</title>
        <authorList>
            <person name="Engel S.R."/>
            <person name="Dietrich F.S."/>
            <person name="Fisk D.G."/>
            <person name="Binkley G."/>
            <person name="Balakrishnan R."/>
            <person name="Costanzo M.C."/>
            <person name="Dwight S.S."/>
            <person name="Hitz B.C."/>
            <person name="Karra K."/>
            <person name="Nash R.S."/>
            <person name="Weng S."/>
            <person name="Wong E.D."/>
            <person name="Lloyd P."/>
            <person name="Skrzypek M.S."/>
            <person name="Miyasato S.R."/>
            <person name="Simison M."/>
            <person name="Cherry J.M."/>
        </authorList>
    </citation>
    <scope>GENOME REANNOTATION</scope>
    <source>
        <strain>ATCC 204508 / S288c</strain>
    </source>
</reference>
<reference key="5">
    <citation type="journal article" date="2003" name="Nature">
        <title>Global analysis of protein expression in yeast.</title>
        <authorList>
            <person name="Ghaemmaghami S."/>
            <person name="Huh W.-K."/>
            <person name="Bower K."/>
            <person name="Howson R.W."/>
            <person name="Belle A."/>
            <person name="Dephoure N."/>
            <person name="O'Shea E.K."/>
            <person name="Weissman J.S."/>
        </authorList>
    </citation>
    <scope>LEVEL OF PROTEIN EXPRESSION [LARGE SCALE ANALYSIS]</scope>
</reference>
<comment type="function">
    <text>Essential for the control of the cell cycle at the G2/M (mitosis) transition. Interacts with the CDC2 protein kinase to form MPF. G2/M cyclins accumulate steadily during G2 and are abruptly destroyed at mitosis.</text>
</comment>
<comment type="interaction">
    <interactant intactId="EBI-4508">
        <id>P24868</id>
    </interactant>
    <interactant intactId="EBI-4746">
        <id>P20486</id>
        <label>CKS1</label>
    </interactant>
    <organismsDiffer>false</organismsDiffer>
    <experiments>3</experiments>
</comment>
<comment type="developmental stage">
    <text>Maximally expressed before mitosis. The levels peak late in the G2 phase of the cell cycle and are at a minimum in G1 phase.</text>
</comment>
<comment type="miscellaneous">
    <text evidence="1">Present with 300 molecules/cell in log phase SD medium.</text>
</comment>
<comment type="similarity">
    <text evidence="2">Belongs to the cyclin family. Cyclin AB subfamily.</text>
</comment>
<proteinExistence type="evidence at protein level"/>
<name>CG21_YEAST</name>
<organism>
    <name type="scientific">Saccharomyces cerevisiae (strain ATCC 204508 / S288c)</name>
    <name type="common">Baker's yeast</name>
    <dbReference type="NCBI Taxonomy" id="559292"/>
    <lineage>
        <taxon>Eukaryota</taxon>
        <taxon>Fungi</taxon>
        <taxon>Dikarya</taxon>
        <taxon>Ascomycota</taxon>
        <taxon>Saccharomycotina</taxon>
        <taxon>Saccharomycetes</taxon>
        <taxon>Saccharomycetales</taxon>
        <taxon>Saccharomycetaceae</taxon>
        <taxon>Saccharomyces</taxon>
    </lineage>
</organism>
<gene>
    <name type="primary">CLB1</name>
    <name type="synonym">SCB1</name>
    <name type="ordered locus">YGR108W</name>
    <name type="ORF">G5967</name>
</gene>
<keyword id="KW-0131">Cell cycle</keyword>
<keyword id="KW-0132">Cell division</keyword>
<keyword id="KW-0195">Cyclin</keyword>
<keyword id="KW-0498">Mitosis</keyword>
<keyword id="KW-1185">Reference proteome</keyword>